<keyword id="KW-0028">Amino-acid biosynthesis</keyword>
<keyword id="KW-0057">Aromatic amino acid biosynthesis</keyword>
<keyword id="KW-0456">Lyase</keyword>
<keyword id="KW-1185">Reference proteome</keyword>
<name>AROQ_PHOLL</name>
<sequence length="150" mass="16492">MAGKFHILLLNGPNLNMLGTREPDIYGSLTLDDIVSKLSEEAHQSGVKFSHLQSNAEFELINRIHSAQGNTDFILINPAAFTHTSVALRDALLTVKIPFIEIHLSNVHAREPFRHHSYLSDLAVGVICGLGVDGYSFALQAAVNRLSKFN</sequence>
<proteinExistence type="inferred from homology"/>
<protein>
    <recommendedName>
        <fullName evidence="1">3-dehydroquinate dehydratase</fullName>
        <shortName evidence="1">3-dehydroquinase</shortName>
        <ecNumber evidence="1">4.2.1.10</ecNumber>
    </recommendedName>
    <alternativeName>
        <fullName evidence="1">Type II DHQase</fullName>
    </alternativeName>
</protein>
<reference key="1">
    <citation type="journal article" date="2003" name="Nat. Biotechnol.">
        <title>The genome sequence of the entomopathogenic bacterium Photorhabdus luminescens.</title>
        <authorList>
            <person name="Duchaud E."/>
            <person name="Rusniok C."/>
            <person name="Frangeul L."/>
            <person name="Buchrieser C."/>
            <person name="Givaudan A."/>
            <person name="Taourit S."/>
            <person name="Bocs S."/>
            <person name="Boursaux-Eude C."/>
            <person name="Chandler M."/>
            <person name="Charles J.-F."/>
            <person name="Dassa E."/>
            <person name="Derose R."/>
            <person name="Derzelle S."/>
            <person name="Freyssinet G."/>
            <person name="Gaudriault S."/>
            <person name="Medigue C."/>
            <person name="Lanois A."/>
            <person name="Powell K."/>
            <person name="Siguier P."/>
            <person name="Vincent R."/>
            <person name="Wingate V."/>
            <person name="Zouine M."/>
            <person name="Glaser P."/>
            <person name="Boemare N."/>
            <person name="Danchin A."/>
            <person name="Kunst F."/>
        </authorList>
    </citation>
    <scope>NUCLEOTIDE SEQUENCE [LARGE SCALE GENOMIC DNA]</scope>
    <source>
        <strain>DSM 15139 / CIP 105565 / TT01</strain>
    </source>
</reference>
<feature type="chain" id="PRO_0000159913" description="3-dehydroquinate dehydratase">
    <location>
        <begin position="1"/>
        <end position="150"/>
    </location>
</feature>
<feature type="active site" description="Proton acceptor" evidence="1">
    <location>
        <position position="26"/>
    </location>
</feature>
<feature type="active site" description="Proton donor" evidence="1">
    <location>
        <position position="103"/>
    </location>
</feature>
<feature type="binding site" evidence="1">
    <location>
        <position position="77"/>
    </location>
    <ligand>
        <name>substrate</name>
    </ligand>
</feature>
<feature type="binding site" evidence="1">
    <location>
        <position position="83"/>
    </location>
    <ligand>
        <name>substrate</name>
    </ligand>
</feature>
<feature type="binding site" evidence="1">
    <location>
        <position position="90"/>
    </location>
    <ligand>
        <name>substrate</name>
    </ligand>
</feature>
<feature type="binding site" evidence="1">
    <location>
        <begin position="104"/>
        <end position="105"/>
    </location>
    <ligand>
        <name>substrate</name>
    </ligand>
</feature>
<feature type="binding site" evidence="1">
    <location>
        <position position="114"/>
    </location>
    <ligand>
        <name>substrate</name>
    </ligand>
</feature>
<feature type="site" description="Transition state stabilizer" evidence="1">
    <location>
        <position position="21"/>
    </location>
</feature>
<gene>
    <name evidence="1" type="primary">aroQ</name>
    <name type="ordered locus">plu4073</name>
</gene>
<comment type="function">
    <text evidence="1">Catalyzes a trans-dehydration via an enolate intermediate.</text>
</comment>
<comment type="catalytic activity">
    <reaction evidence="1">
        <text>3-dehydroquinate = 3-dehydroshikimate + H2O</text>
        <dbReference type="Rhea" id="RHEA:21096"/>
        <dbReference type="ChEBI" id="CHEBI:15377"/>
        <dbReference type="ChEBI" id="CHEBI:16630"/>
        <dbReference type="ChEBI" id="CHEBI:32364"/>
        <dbReference type="EC" id="4.2.1.10"/>
    </reaction>
</comment>
<comment type="pathway">
    <text evidence="1">Metabolic intermediate biosynthesis; chorismate biosynthesis; chorismate from D-erythrose 4-phosphate and phosphoenolpyruvate: step 3/7.</text>
</comment>
<comment type="subunit">
    <text evidence="1">Homododecamer.</text>
</comment>
<comment type="similarity">
    <text evidence="1">Belongs to the type-II 3-dehydroquinase family.</text>
</comment>
<evidence type="ECO:0000255" key="1">
    <source>
        <dbReference type="HAMAP-Rule" id="MF_00169"/>
    </source>
</evidence>
<dbReference type="EC" id="4.2.1.10" evidence="1"/>
<dbReference type="EMBL" id="BX571872">
    <property type="protein sequence ID" value="CAE16445.1"/>
    <property type="molecule type" value="Genomic_DNA"/>
</dbReference>
<dbReference type="RefSeq" id="WP_011148196.1">
    <property type="nucleotide sequence ID" value="NC_005126.1"/>
</dbReference>
<dbReference type="SMR" id="Q7N030"/>
<dbReference type="STRING" id="243265.plu4073"/>
<dbReference type="GeneID" id="48850292"/>
<dbReference type="KEGG" id="plu:plu4073"/>
<dbReference type="eggNOG" id="COG0757">
    <property type="taxonomic scope" value="Bacteria"/>
</dbReference>
<dbReference type="HOGENOM" id="CLU_090968_1_0_6"/>
<dbReference type="OrthoDB" id="9790793at2"/>
<dbReference type="UniPathway" id="UPA00053">
    <property type="reaction ID" value="UER00086"/>
</dbReference>
<dbReference type="Proteomes" id="UP000002514">
    <property type="component" value="Chromosome"/>
</dbReference>
<dbReference type="GO" id="GO:0003855">
    <property type="term" value="F:3-dehydroquinate dehydratase activity"/>
    <property type="evidence" value="ECO:0007669"/>
    <property type="project" value="UniProtKB-UniRule"/>
</dbReference>
<dbReference type="GO" id="GO:0008652">
    <property type="term" value="P:amino acid biosynthetic process"/>
    <property type="evidence" value="ECO:0007669"/>
    <property type="project" value="UniProtKB-KW"/>
</dbReference>
<dbReference type="GO" id="GO:0009073">
    <property type="term" value="P:aromatic amino acid family biosynthetic process"/>
    <property type="evidence" value="ECO:0007669"/>
    <property type="project" value="UniProtKB-KW"/>
</dbReference>
<dbReference type="GO" id="GO:0009423">
    <property type="term" value="P:chorismate biosynthetic process"/>
    <property type="evidence" value="ECO:0007669"/>
    <property type="project" value="UniProtKB-UniRule"/>
</dbReference>
<dbReference type="GO" id="GO:0019631">
    <property type="term" value="P:quinate catabolic process"/>
    <property type="evidence" value="ECO:0007669"/>
    <property type="project" value="TreeGrafter"/>
</dbReference>
<dbReference type="CDD" id="cd00466">
    <property type="entry name" value="DHQase_II"/>
    <property type="match status" value="1"/>
</dbReference>
<dbReference type="Gene3D" id="3.40.50.9100">
    <property type="entry name" value="Dehydroquinase, class II"/>
    <property type="match status" value="1"/>
</dbReference>
<dbReference type="HAMAP" id="MF_00169">
    <property type="entry name" value="AroQ"/>
    <property type="match status" value="1"/>
</dbReference>
<dbReference type="InterPro" id="IPR001874">
    <property type="entry name" value="DHquinase_II"/>
</dbReference>
<dbReference type="InterPro" id="IPR018509">
    <property type="entry name" value="DHquinase_II_CS"/>
</dbReference>
<dbReference type="InterPro" id="IPR036441">
    <property type="entry name" value="DHquinase_II_sf"/>
</dbReference>
<dbReference type="NCBIfam" id="TIGR01088">
    <property type="entry name" value="aroQ"/>
    <property type="match status" value="1"/>
</dbReference>
<dbReference type="NCBIfam" id="NF003804">
    <property type="entry name" value="PRK05395.1-1"/>
    <property type="match status" value="1"/>
</dbReference>
<dbReference type="NCBIfam" id="NF003805">
    <property type="entry name" value="PRK05395.1-2"/>
    <property type="match status" value="1"/>
</dbReference>
<dbReference type="NCBIfam" id="NF003806">
    <property type="entry name" value="PRK05395.1-3"/>
    <property type="match status" value="1"/>
</dbReference>
<dbReference type="NCBIfam" id="NF003807">
    <property type="entry name" value="PRK05395.1-4"/>
    <property type="match status" value="1"/>
</dbReference>
<dbReference type="PANTHER" id="PTHR21272">
    <property type="entry name" value="CATABOLIC 3-DEHYDROQUINASE"/>
    <property type="match status" value="1"/>
</dbReference>
<dbReference type="PANTHER" id="PTHR21272:SF3">
    <property type="entry name" value="CATABOLIC 3-DEHYDROQUINASE"/>
    <property type="match status" value="1"/>
</dbReference>
<dbReference type="Pfam" id="PF01220">
    <property type="entry name" value="DHquinase_II"/>
    <property type="match status" value="1"/>
</dbReference>
<dbReference type="PIRSF" id="PIRSF001399">
    <property type="entry name" value="DHquinase_II"/>
    <property type="match status" value="1"/>
</dbReference>
<dbReference type="SUPFAM" id="SSF52304">
    <property type="entry name" value="Type II 3-dehydroquinate dehydratase"/>
    <property type="match status" value="1"/>
</dbReference>
<dbReference type="PROSITE" id="PS01029">
    <property type="entry name" value="DEHYDROQUINASE_II"/>
    <property type="match status" value="1"/>
</dbReference>
<organism>
    <name type="scientific">Photorhabdus laumondii subsp. laumondii (strain DSM 15139 / CIP 105565 / TT01)</name>
    <name type="common">Photorhabdus luminescens subsp. laumondii</name>
    <dbReference type="NCBI Taxonomy" id="243265"/>
    <lineage>
        <taxon>Bacteria</taxon>
        <taxon>Pseudomonadati</taxon>
        <taxon>Pseudomonadota</taxon>
        <taxon>Gammaproteobacteria</taxon>
        <taxon>Enterobacterales</taxon>
        <taxon>Morganellaceae</taxon>
        <taxon>Photorhabdus</taxon>
    </lineage>
</organism>
<accession>Q7N030</accession>